<organism>
    <name type="scientific">Yersinia pseudotuberculosis serotype I (strain IP32953)</name>
    <dbReference type="NCBI Taxonomy" id="273123"/>
    <lineage>
        <taxon>Bacteria</taxon>
        <taxon>Pseudomonadati</taxon>
        <taxon>Pseudomonadota</taxon>
        <taxon>Gammaproteobacteria</taxon>
        <taxon>Enterobacterales</taxon>
        <taxon>Yersiniaceae</taxon>
        <taxon>Yersinia</taxon>
    </lineage>
</organism>
<gene>
    <name evidence="1" type="primary">atpH</name>
    <name type="ordered locus">YPTB3970</name>
</gene>
<evidence type="ECO:0000255" key="1">
    <source>
        <dbReference type="HAMAP-Rule" id="MF_01416"/>
    </source>
</evidence>
<sequence>MSEFVTVARPYAKAAFDFAVEHQAVERWQNMLAFTAQVTRNEQIAELLSGAVAPETMSTTFIAVCGDQLDEPAQNFIRVMAENGRLLVLPEVLQQFIQLRASLESTVDVEVSSARALNDEQLAKIAAAMEKRLSRKVKLNCKIDKSVMAGVVIRAGDMVIDGSVRGRLERLADVLQS</sequence>
<accession>Q663Q5</accession>
<dbReference type="EMBL" id="BX936398">
    <property type="protein sequence ID" value="CAH23208.1"/>
    <property type="molecule type" value="Genomic_DNA"/>
</dbReference>
<dbReference type="RefSeq" id="WP_002220760.1">
    <property type="nucleotide sequence ID" value="NZ_CP009712.1"/>
</dbReference>
<dbReference type="SMR" id="Q663Q5"/>
<dbReference type="GeneID" id="57974600"/>
<dbReference type="KEGG" id="ypo:BZ17_2605"/>
<dbReference type="KEGG" id="yps:YPTB3970"/>
<dbReference type="PATRIC" id="fig|273123.14.peg.2731"/>
<dbReference type="Proteomes" id="UP000001011">
    <property type="component" value="Chromosome"/>
</dbReference>
<dbReference type="GO" id="GO:0005886">
    <property type="term" value="C:plasma membrane"/>
    <property type="evidence" value="ECO:0007669"/>
    <property type="project" value="UniProtKB-SubCell"/>
</dbReference>
<dbReference type="GO" id="GO:0045259">
    <property type="term" value="C:proton-transporting ATP synthase complex"/>
    <property type="evidence" value="ECO:0007669"/>
    <property type="project" value="UniProtKB-KW"/>
</dbReference>
<dbReference type="GO" id="GO:0046933">
    <property type="term" value="F:proton-transporting ATP synthase activity, rotational mechanism"/>
    <property type="evidence" value="ECO:0007669"/>
    <property type="project" value="UniProtKB-UniRule"/>
</dbReference>
<dbReference type="FunFam" id="1.10.520.20:FF:000001">
    <property type="entry name" value="ATP synthase subunit delta"/>
    <property type="match status" value="1"/>
</dbReference>
<dbReference type="Gene3D" id="1.10.520.20">
    <property type="entry name" value="N-terminal domain of the delta subunit of the F1F0-ATP synthase"/>
    <property type="match status" value="1"/>
</dbReference>
<dbReference type="HAMAP" id="MF_01416">
    <property type="entry name" value="ATP_synth_delta_bact"/>
    <property type="match status" value="1"/>
</dbReference>
<dbReference type="InterPro" id="IPR026015">
    <property type="entry name" value="ATP_synth_OSCP/delta_N_sf"/>
</dbReference>
<dbReference type="InterPro" id="IPR020781">
    <property type="entry name" value="ATPase_OSCP/d_CS"/>
</dbReference>
<dbReference type="InterPro" id="IPR000711">
    <property type="entry name" value="ATPase_OSCP/dsu"/>
</dbReference>
<dbReference type="NCBIfam" id="TIGR01145">
    <property type="entry name" value="ATP_synt_delta"/>
    <property type="match status" value="1"/>
</dbReference>
<dbReference type="NCBIfam" id="NF004402">
    <property type="entry name" value="PRK05758.2-2"/>
    <property type="match status" value="1"/>
</dbReference>
<dbReference type="NCBIfam" id="NF004404">
    <property type="entry name" value="PRK05758.2-5"/>
    <property type="match status" value="1"/>
</dbReference>
<dbReference type="PANTHER" id="PTHR11910">
    <property type="entry name" value="ATP SYNTHASE DELTA CHAIN"/>
    <property type="match status" value="1"/>
</dbReference>
<dbReference type="Pfam" id="PF00213">
    <property type="entry name" value="OSCP"/>
    <property type="match status" value="1"/>
</dbReference>
<dbReference type="PRINTS" id="PR00125">
    <property type="entry name" value="ATPASEDELTA"/>
</dbReference>
<dbReference type="SUPFAM" id="SSF47928">
    <property type="entry name" value="N-terminal domain of the delta subunit of the F1F0-ATP synthase"/>
    <property type="match status" value="1"/>
</dbReference>
<dbReference type="PROSITE" id="PS00389">
    <property type="entry name" value="ATPASE_DELTA"/>
    <property type="match status" value="1"/>
</dbReference>
<proteinExistence type="inferred from homology"/>
<reference key="1">
    <citation type="journal article" date="2004" name="Proc. Natl. Acad. Sci. U.S.A.">
        <title>Insights into the evolution of Yersinia pestis through whole-genome comparison with Yersinia pseudotuberculosis.</title>
        <authorList>
            <person name="Chain P.S.G."/>
            <person name="Carniel E."/>
            <person name="Larimer F.W."/>
            <person name="Lamerdin J."/>
            <person name="Stoutland P.O."/>
            <person name="Regala W.M."/>
            <person name="Georgescu A.M."/>
            <person name="Vergez L.M."/>
            <person name="Land M.L."/>
            <person name="Motin V.L."/>
            <person name="Brubaker R.R."/>
            <person name="Fowler J."/>
            <person name="Hinnebusch J."/>
            <person name="Marceau M."/>
            <person name="Medigue C."/>
            <person name="Simonet M."/>
            <person name="Chenal-Francisque V."/>
            <person name="Souza B."/>
            <person name="Dacheux D."/>
            <person name="Elliott J.M."/>
            <person name="Derbise A."/>
            <person name="Hauser L.J."/>
            <person name="Garcia E."/>
        </authorList>
    </citation>
    <scope>NUCLEOTIDE SEQUENCE [LARGE SCALE GENOMIC DNA]</scope>
    <source>
        <strain>IP32953</strain>
    </source>
</reference>
<name>ATPD_YERPS</name>
<keyword id="KW-0066">ATP synthesis</keyword>
<keyword id="KW-0997">Cell inner membrane</keyword>
<keyword id="KW-1003">Cell membrane</keyword>
<keyword id="KW-0139">CF(1)</keyword>
<keyword id="KW-0375">Hydrogen ion transport</keyword>
<keyword id="KW-0406">Ion transport</keyword>
<keyword id="KW-0472">Membrane</keyword>
<keyword id="KW-0813">Transport</keyword>
<comment type="function">
    <text evidence="1">F(1)F(0) ATP synthase produces ATP from ADP in the presence of a proton or sodium gradient. F-type ATPases consist of two structural domains, F(1) containing the extramembraneous catalytic core and F(0) containing the membrane proton channel, linked together by a central stalk and a peripheral stalk. During catalysis, ATP synthesis in the catalytic domain of F(1) is coupled via a rotary mechanism of the central stalk subunits to proton translocation.</text>
</comment>
<comment type="function">
    <text evidence="1">This protein is part of the stalk that links CF(0) to CF(1). It either transmits conformational changes from CF(0) to CF(1) or is implicated in proton conduction.</text>
</comment>
<comment type="subunit">
    <text evidence="1">F-type ATPases have 2 components, F(1) - the catalytic core - and F(0) - the membrane proton channel. F(1) has five subunits: alpha(3), beta(3), gamma(1), delta(1), epsilon(1). F(0) has three main subunits: a(1), b(2) and c(10-14). The alpha and beta chains form an alternating ring which encloses part of the gamma chain. F(1) is attached to F(0) by a central stalk formed by the gamma and epsilon chains, while a peripheral stalk is formed by the delta and b chains.</text>
</comment>
<comment type="subcellular location">
    <subcellularLocation>
        <location evidence="1">Cell inner membrane</location>
        <topology evidence="1">Peripheral membrane protein</topology>
    </subcellularLocation>
</comment>
<comment type="similarity">
    <text evidence="1">Belongs to the ATPase delta chain family.</text>
</comment>
<feature type="chain" id="PRO_0000371205" description="ATP synthase subunit delta">
    <location>
        <begin position="1"/>
        <end position="177"/>
    </location>
</feature>
<protein>
    <recommendedName>
        <fullName evidence="1">ATP synthase subunit delta</fullName>
    </recommendedName>
    <alternativeName>
        <fullName evidence="1">ATP synthase F(1) sector subunit delta</fullName>
    </alternativeName>
    <alternativeName>
        <fullName evidence="1">F-type ATPase subunit delta</fullName>
        <shortName evidence="1">F-ATPase subunit delta</shortName>
    </alternativeName>
</protein>